<feature type="chain" id="PRO_0000386010" description="GTPase Obg">
    <location>
        <begin position="1"/>
        <end position="341"/>
    </location>
</feature>
<feature type="domain" description="Obg" evidence="2">
    <location>
        <begin position="1"/>
        <end position="159"/>
    </location>
</feature>
<feature type="domain" description="OBG-type G" evidence="1">
    <location>
        <begin position="160"/>
        <end position="334"/>
    </location>
</feature>
<feature type="region of interest" description="Disordered" evidence="3">
    <location>
        <begin position="128"/>
        <end position="150"/>
    </location>
</feature>
<feature type="compositionally biased region" description="Polar residues" evidence="3">
    <location>
        <begin position="129"/>
        <end position="144"/>
    </location>
</feature>
<feature type="binding site" evidence="1">
    <location>
        <begin position="166"/>
        <end position="173"/>
    </location>
    <ligand>
        <name>GTP</name>
        <dbReference type="ChEBI" id="CHEBI:37565"/>
    </ligand>
</feature>
<feature type="binding site" evidence="1">
    <location>
        <position position="173"/>
    </location>
    <ligand>
        <name>Mg(2+)</name>
        <dbReference type="ChEBI" id="CHEBI:18420"/>
    </ligand>
</feature>
<feature type="binding site" evidence="1">
    <location>
        <begin position="191"/>
        <end position="195"/>
    </location>
    <ligand>
        <name>GTP</name>
        <dbReference type="ChEBI" id="CHEBI:37565"/>
    </ligand>
</feature>
<feature type="binding site" evidence="1">
    <location>
        <position position="193"/>
    </location>
    <ligand>
        <name>Mg(2+)</name>
        <dbReference type="ChEBI" id="CHEBI:18420"/>
    </ligand>
</feature>
<feature type="binding site" evidence="1">
    <location>
        <begin position="213"/>
        <end position="216"/>
    </location>
    <ligand>
        <name>GTP</name>
        <dbReference type="ChEBI" id="CHEBI:37565"/>
    </ligand>
</feature>
<feature type="binding site" evidence="1">
    <location>
        <begin position="283"/>
        <end position="286"/>
    </location>
    <ligand>
        <name>GTP</name>
        <dbReference type="ChEBI" id="CHEBI:37565"/>
    </ligand>
</feature>
<feature type="binding site" evidence="1">
    <location>
        <begin position="315"/>
        <end position="317"/>
    </location>
    <ligand>
        <name>GTP</name>
        <dbReference type="ChEBI" id="CHEBI:37565"/>
    </ligand>
</feature>
<name>OBG_LEGPA</name>
<gene>
    <name evidence="1" type="primary">obg</name>
    <name type="ordered locus">lpp2702</name>
</gene>
<proteinExistence type="inferred from homology"/>
<evidence type="ECO:0000255" key="1">
    <source>
        <dbReference type="HAMAP-Rule" id="MF_01454"/>
    </source>
</evidence>
<evidence type="ECO:0000255" key="2">
    <source>
        <dbReference type="PROSITE-ProRule" id="PRU01231"/>
    </source>
</evidence>
<evidence type="ECO:0000256" key="3">
    <source>
        <dbReference type="SAM" id="MobiDB-lite"/>
    </source>
</evidence>
<reference key="1">
    <citation type="journal article" date="2004" name="Nat. Genet.">
        <title>Evidence in the Legionella pneumophila genome for exploitation of host cell functions and high genome plasticity.</title>
        <authorList>
            <person name="Cazalet C."/>
            <person name="Rusniok C."/>
            <person name="Brueggemann H."/>
            <person name="Zidane N."/>
            <person name="Magnier A."/>
            <person name="Ma L."/>
            <person name="Tichit M."/>
            <person name="Jarraud S."/>
            <person name="Bouchier C."/>
            <person name="Vandenesch F."/>
            <person name="Kunst F."/>
            <person name="Etienne J."/>
            <person name="Glaser P."/>
            <person name="Buchrieser C."/>
        </authorList>
    </citation>
    <scope>NUCLEOTIDE SEQUENCE [LARGE SCALE GENOMIC DNA]</scope>
    <source>
        <strain>Paris</strain>
    </source>
</reference>
<protein>
    <recommendedName>
        <fullName evidence="1">GTPase Obg</fullName>
        <ecNumber evidence="1">3.6.5.-</ecNumber>
    </recommendedName>
    <alternativeName>
        <fullName evidence="1">GTP-binding protein Obg</fullName>
    </alternativeName>
</protein>
<accession>Q5X1P1</accession>
<keyword id="KW-0963">Cytoplasm</keyword>
<keyword id="KW-0342">GTP-binding</keyword>
<keyword id="KW-0378">Hydrolase</keyword>
<keyword id="KW-0460">Magnesium</keyword>
<keyword id="KW-0479">Metal-binding</keyword>
<keyword id="KW-0547">Nucleotide-binding</keyword>
<organism>
    <name type="scientific">Legionella pneumophila (strain Paris)</name>
    <dbReference type="NCBI Taxonomy" id="297246"/>
    <lineage>
        <taxon>Bacteria</taxon>
        <taxon>Pseudomonadati</taxon>
        <taxon>Pseudomonadota</taxon>
        <taxon>Gammaproteobacteria</taxon>
        <taxon>Legionellales</taxon>
        <taxon>Legionellaceae</taxon>
        <taxon>Legionella</taxon>
    </lineage>
</organism>
<dbReference type="EC" id="3.6.5.-" evidence="1"/>
<dbReference type="EMBL" id="CR628336">
    <property type="protein sequence ID" value="CAH13855.1"/>
    <property type="molecule type" value="Genomic_DNA"/>
</dbReference>
<dbReference type="SMR" id="Q5X1P1"/>
<dbReference type="KEGG" id="lpp:lpp2702"/>
<dbReference type="LegioList" id="lpp2702"/>
<dbReference type="HOGENOM" id="CLU_011747_2_0_6"/>
<dbReference type="GO" id="GO:0005737">
    <property type="term" value="C:cytoplasm"/>
    <property type="evidence" value="ECO:0007669"/>
    <property type="project" value="UniProtKB-SubCell"/>
</dbReference>
<dbReference type="GO" id="GO:0005525">
    <property type="term" value="F:GTP binding"/>
    <property type="evidence" value="ECO:0007669"/>
    <property type="project" value="UniProtKB-UniRule"/>
</dbReference>
<dbReference type="GO" id="GO:0003924">
    <property type="term" value="F:GTPase activity"/>
    <property type="evidence" value="ECO:0007669"/>
    <property type="project" value="UniProtKB-UniRule"/>
</dbReference>
<dbReference type="GO" id="GO:0000287">
    <property type="term" value="F:magnesium ion binding"/>
    <property type="evidence" value="ECO:0007669"/>
    <property type="project" value="InterPro"/>
</dbReference>
<dbReference type="GO" id="GO:0042254">
    <property type="term" value="P:ribosome biogenesis"/>
    <property type="evidence" value="ECO:0007669"/>
    <property type="project" value="UniProtKB-UniRule"/>
</dbReference>
<dbReference type="CDD" id="cd01898">
    <property type="entry name" value="Obg"/>
    <property type="match status" value="1"/>
</dbReference>
<dbReference type="FunFam" id="2.70.210.12:FF:000001">
    <property type="entry name" value="GTPase Obg"/>
    <property type="match status" value="1"/>
</dbReference>
<dbReference type="Gene3D" id="2.70.210.12">
    <property type="entry name" value="GTP1/OBG domain"/>
    <property type="match status" value="1"/>
</dbReference>
<dbReference type="Gene3D" id="3.40.50.300">
    <property type="entry name" value="P-loop containing nucleotide triphosphate hydrolases"/>
    <property type="match status" value="1"/>
</dbReference>
<dbReference type="HAMAP" id="MF_01454">
    <property type="entry name" value="GTPase_Obg"/>
    <property type="match status" value="1"/>
</dbReference>
<dbReference type="InterPro" id="IPR031167">
    <property type="entry name" value="G_OBG"/>
</dbReference>
<dbReference type="InterPro" id="IPR006073">
    <property type="entry name" value="GTP-bd"/>
</dbReference>
<dbReference type="InterPro" id="IPR014100">
    <property type="entry name" value="GTP-bd_Obg/CgtA"/>
</dbReference>
<dbReference type="InterPro" id="IPR006074">
    <property type="entry name" value="GTP1-OBG_CS"/>
</dbReference>
<dbReference type="InterPro" id="IPR006169">
    <property type="entry name" value="GTP1_OBG_dom"/>
</dbReference>
<dbReference type="InterPro" id="IPR036726">
    <property type="entry name" value="GTP1_OBG_dom_sf"/>
</dbReference>
<dbReference type="InterPro" id="IPR045086">
    <property type="entry name" value="OBG_GTPase"/>
</dbReference>
<dbReference type="InterPro" id="IPR027417">
    <property type="entry name" value="P-loop_NTPase"/>
</dbReference>
<dbReference type="InterPro" id="IPR005225">
    <property type="entry name" value="Small_GTP-bd"/>
</dbReference>
<dbReference type="NCBIfam" id="TIGR02729">
    <property type="entry name" value="Obg_CgtA"/>
    <property type="match status" value="1"/>
</dbReference>
<dbReference type="NCBIfam" id="NF008955">
    <property type="entry name" value="PRK12297.1"/>
    <property type="match status" value="1"/>
</dbReference>
<dbReference type="NCBIfam" id="NF008956">
    <property type="entry name" value="PRK12299.1"/>
    <property type="match status" value="1"/>
</dbReference>
<dbReference type="NCBIfam" id="TIGR00231">
    <property type="entry name" value="small_GTP"/>
    <property type="match status" value="1"/>
</dbReference>
<dbReference type="PANTHER" id="PTHR11702">
    <property type="entry name" value="DEVELOPMENTALLY REGULATED GTP-BINDING PROTEIN-RELATED"/>
    <property type="match status" value="1"/>
</dbReference>
<dbReference type="PANTHER" id="PTHR11702:SF31">
    <property type="entry name" value="MITOCHONDRIAL RIBOSOME-ASSOCIATED GTPASE 2"/>
    <property type="match status" value="1"/>
</dbReference>
<dbReference type="Pfam" id="PF01018">
    <property type="entry name" value="GTP1_OBG"/>
    <property type="match status" value="1"/>
</dbReference>
<dbReference type="Pfam" id="PF01926">
    <property type="entry name" value="MMR_HSR1"/>
    <property type="match status" value="1"/>
</dbReference>
<dbReference type="PIRSF" id="PIRSF002401">
    <property type="entry name" value="GTP_bd_Obg/CgtA"/>
    <property type="match status" value="1"/>
</dbReference>
<dbReference type="PRINTS" id="PR00326">
    <property type="entry name" value="GTP1OBG"/>
</dbReference>
<dbReference type="SUPFAM" id="SSF82051">
    <property type="entry name" value="Obg GTP-binding protein N-terminal domain"/>
    <property type="match status" value="1"/>
</dbReference>
<dbReference type="SUPFAM" id="SSF52540">
    <property type="entry name" value="P-loop containing nucleoside triphosphate hydrolases"/>
    <property type="match status" value="1"/>
</dbReference>
<dbReference type="PROSITE" id="PS51710">
    <property type="entry name" value="G_OBG"/>
    <property type="match status" value="1"/>
</dbReference>
<dbReference type="PROSITE" id="PS00905">
    <property type="entry name" value="GTP1_OBG"/>
    <property type="match status" value="1"/>
</dbReference>
<dbReference type="PROSITE" id="PS51883">
    <property type="entry name" value="OBG"/>
    <property type="match status" value="1"/>
</dbReference>
<sequence length="341" mass="36775">MKFVDEALIKVEAGKGGNGCLSFRREKFIPRGGPDGGDGGDGGSIYFEASSDLNTLIDFRYTRQYKAENGQSGMGGNCTGKKGEDLTIKVPVGTMVYDADTGELLADISQPGVPVLIAQGGFHGLGNTRYKSSVNRSPRQTTPGSPGESRNLRLELRVLADVGLLGLPNAGKSTLIRAVSSSKAKVADYPFTTLHPGLGVVRVSPYKSFVMADIPGLIEGAAQGAGLGHRFLKHLSRTCVLLHVIDIAPLDGSDPVADAKAILNELTQYNPDLLNKPRWLVLNKIDMLPDEKEREEKIQSIIKGLKWKDKVFSISAIESKGTQELCYALMQLIDEMKESEA</sequence>
<comment type="function">
    <text evidence="1">An essential GTPase which binds GTP, GDP and possibly (p)ppGpp with moderate affinity, with high nucleotide exchange rates and a fairly low GTP hydrolysis rate. Plays a role in control of the cell cycle, stress response, ribosome biogenesis and in those bacteria that undergo differentiation, in morphogenesis control.</text>
</comment>
<comment type="cofactor">
    <cofactor evidence="1">
        <name>Mg(2+)</name>
        <dbReference type="ChEBI" id="CHEBI:18420"/>
    </cofactor>
</comment>
<comment type="subunit">
    <text evidence="1">Monomer.</text>
</comment>
<comment type="subcellular location">
    <subcellularLocation>
        <location evidence="1">Cytoplasm</location>
    </subcellularLocation>
</comment>
<comment type="similarity">
    <text evidence="1">Belongs to the TRAFAC class OBG-HflX-like GTPase superfamily. OBG GTPase family.</text>
</comment>